<proteinExistence type="evidence at protein level"/>
<gene>
    <name type="primary">CIART</name>
    <name type="synonym">C1orf51</name>
</gene>
<evidence type="ECO:0000250" key="1"/>
<evidence type="ECO:0000256" key="2">
    <source>
        <dbReference type="SAM" id="MobiDB-lite"/>
    </source>
</evidence>
<evidence type="ECO:0000269" key="3">
    <source>
    </source>
</evidence>
<evidence type="ECO:0000303" key="4">
    <source>
    </source>
</evidence>
<evidence type="ECO:0000305" key="5"/>
<dbReference type="EMBL" id="AK056960">
    <property type="protein sequence ID" value="BAB71326.1"/>
    <property type="molecule type" value="mRNA"/>
</dbReference>
<dbReference type="EMBL" id="AK098755">
    <property type="protein sequence ID" value="BAC05404.1"/>
    <property type="molecule type" value="mRNA"/>
</dbReference>
<dbReference type="EMBL" id="AK315397">
    <property type="protein sequence ID" value="BAG37790.1"/>
    <property type="molecule type" value="mRNA"/>
</dbReference>
<dbReference type="EMBL" id="AL138795">
    <property type="protein sequence ID" value="CAI22816.1"/>
    <property type="molecule type" value="Genomic_DNA"/>
</dbReference>
<dbReference type="EMBL" id="CH471121">
    <property type="protein sequence ID" value="EAW53560.1"/>
    <property type="molecule type" value="Genomic_DNA"/>
</dbReference>
<dbReference type="EMBL" id="CH471121">
    <property type="protein sequence ID" value="EAW53564.1"/>
    <property type="molecule type" value="Genomic_DNA"/>
</dbReference>
<dbReference type="EMBL" id="BC027999">
    <property type="protein sequence ID" value="AAH27999.1"/>
    <property type="molecule type" value="mRNA"/>
</dbReference>
<dbReference type="EMBL" id="BC047238">
    <property type="protein sequence ID" value="AAH47238.1"/>
    <property type="molecule type" value="mRNA"/>
</dbReference>
<dbReference type="CCDS" id="CCDS949.1">
    <molecule id="Q8N365-1"/>
</dbReference>
<dbReference type="RefSeq" id="NP_001287767.1">
    <molecule id="Q8N365-1"/>
    <property type="nucleotide sequence ID" value="NM_001300838.2"/>
</dbReference>
<dbReference type="RefSeq" id="NP_001287769.1">
    <property type="nucleotide sequence ID" value="NM_001300840.1"/>
</dbReference>
<dbReference type="RefSeq" id="NP_001287770.1">
    <property type="nucleotide sequence ID" value="NM_001300841.1"/>
</dbReference>
<dbReference type="RefSeq" id="NP_653298.1">
    <molecule id="Q8N365-1"/>
    <property type="nucleotide sequence ID" value="NM_144697.4"/>
</dbReference>
<dbReference type="RefSeq" id="XP_047302849.1">
    <molecule id="Q8N365-1"/>
    <property type="nucleotide sequence ID" value="XM_047446893.1"/>
</dbReference>
<dbReference type="RefSeq" id="XP_054190550.1">
    <molecule id="Q8N365-1"/>
    <property type="nucleotide sequence ID" value="XM_054334575.1"/>
</dbReference>
<dbReference type="BioGRID" id="127153">
    <property type="interactions" value="19"/>
</dbReference>
<dbReference type="DIP" id="DIP-60822N"/>
<dbReference type="FunCoup" id="Q8N365">
    <property type="interactions" value="869"/>
</dbReference>
<dbReference type="IntAct" id="Q8N365">
    <property type="interactions" value="18"/>
</dbReference>
<dbReference type="STRING" id="9606.ENSP00000290363"/>
<dbReference type="GlyGen" id="Q8N365">
    <property type="glycosylation" value="4 sites, 1 O-linked glycan (3 sites)"/>
</dbReference>
<dbReference type="iPTMnet" id="Q8N365"/>
<dbReference type="PhosphoSitePlus" id="Q8N365"/>
<dbReference type="BioMuta" id="CIART"/>
<dbReference type="MassIVE" id="Q8N365"/>
<dbReference type="PaxDb" id="9606-ENSP00000290363"/>
<dbReference type="PeptideAtlas" id="Q8N365"/>
<dbReference type="ProteomicsDB" id="71767">
    <molecule id="Q8N365-1"/>
</dbReference>
<dbReference type="ProteomicsDB" id="71768">
    <molecule id="Q8N365-2"/>
</dbReference>
<dbReference type="Antibodypedia" id="34023">
    <property type="antibodies" value="137 antibodies from 20 providers"/>
</dbReference>
<dbReference type="DNASU" id="148523"/>
<dbReference type="Ensembl" id="ENST00000290363.6">
    <molecule id="Q8N365-1"/>
    <property type="protein sequence ID" value="ENSP00000290363.5"/>
    <property type="gene ID" value="ENSG00000159208.16"/>
</dbReference>
<dbReference type="Ensembl" id="ENST00000369095.5">
    <molecule id="Q8N365-1"/>
    <property type="protein sequence ID" value="ENSP00000358091.1"/>
    <property type="gene ID" value="ENSG00000159208.16"/>
</dbReference>
<dbReference type="GeneID" id="148523"/>
<dbReference type="KEGG" id="hsa:148523"/>
<dbReference type="MANE-Select" id="ENST00000290363.6">
    <property type="protein sequence ID" value="ENSP00000290363.5"/>
    <property type="RefSeq nucleotide sequence ID" value="NM_144697.4"/>
    <property type="RefSeq protein sequence ID" value="NP_653298.1"/>
</dbReference>
<dbReference type="UCSC" id="uc001euh.4">
    <molecule id="Q8N365-1"/>
    <property type="organism name" value="human"/>
</dbReference>
<dbReference type="AGR" id="HGNC:25200"/>
<dbReference type="CTD" id="148523"/>
<dbReference type="DisGeNET" id="148523"/>
<dbReference type="GeneCards" id="CIART"/>
<dbReference type="HGNC" id="HGNC:25200">
    <property type="gene designation" value="CIART"/>
</dbReference>
<dbReference type="HPA" id="ENSG00000159208">
    <property type="expression patterns" value="Low tissue specificity"/>
</dbReference>
<dbReference type="MIM" id="615782">
    <property type="type" value="gene"/>
</dbReference>
<dbReference type="neXtProt" id="NX_Q8N365"/>
<dbReference type="OpenTargets" id="ENSG00000159208"/>
<dbReference type="PharmGKB" id="PA134921053"/>
<dbReference type="VEuPathDB" id="HostDB:ENSG00000159208"/>
<dbReference type="eggNOG" id="ENOG502RZ6H">
    <property type="taxonomic scope" value="Eukaryota"/>
</dbReference>
<dbReference type="GeneTree" id="ENSGT00390000018360"/>
<dbReference type="HOGENOM" id="CLU_060548_0_0_1"/>
<dbReference type="InParanoid" id="Q8N365"/>
<dbReference type="OMA" id="REMTVGH"/>
<dbReference type="OrthoDB" id="9949430at2759"/>
<dbReference type="PAN-GO" id="Q8N365">
    <property type="GO annotations" value="4 GO annotations based on evolutionary models"/>
</dbReference>
<dbReference type="PhylomeDB" id="Q8N365"/>
<dbReference type="TreeFam" id="TF332541"/>
<dbReference type="PathwayCommons" id="Q8N365"/>
<dbReference type="SignaLink" id="Q8N365"/>
<dbReference type="BioGRID-ORCS" id="148523">
    <property type="hits" value="14 hits in 1121 CRISPR screens"/>
</dbReference>
<dbReference type="GenomeRNAi" id="148523"/>
<dbReference type="Pharos" id="Q8N365">
    <property type="development level" value="Tbio"/>
</dbReference>
<dbReference type="PRO" id="PR:Q8N365"/>
<dbReference type="Proteomes" id="UP000005640">
    <property type="component" value="Chromosome 1"/>
</dbReference>
<dbReference type="RNAct" id="Q8N365">
    <property type="molecule type" value="protein"/>
</dbReference>
<dbReference type="Bgee" id="ENSG00000159208">
    <property type="expression patterns" value="Expressed in oocyte and 145 other cell types or tissues"/>
</dbReference>
<dbReference type="ExpressionAtlas" id="Q8N365">
    <property type="expression patterns" value="baseline and differential"/>
</dbReference>
<dbReference type="GO" id="GO:0005634">
    <property type="term" value="C:nucleus"/>
    <property type="evidence" value="ECO:0000250"/>
    <property type="project" value="UniProtKB"/>
</dbReference>
<dbReference type="GO" id="GO:0016605">
    <property type="term" value="C:PML body"/>
    <property type="evidence" value="ECO:0007669"/>
    <property type="project" value="UniProtKB-SubCell"/>
</dbReference>
<dbReference type="GO" id="GO:0070888">
    <property type="term" value="F:E-box binding"/>
    <property type="evidence" value="ECO:0000250"/>
    <property type="project" value="UniProtKB"/>
</dbReference>
<dbReference type="GO" id="GO:0000978">
    <property type="term" value="F:RNA polymerase II cis-regulatory region sequence-specific DNA binding"/>
    <property type="evidence" value="ECO:0000318"/>
    <property type="project" value="GO_Central"/>
</dbReference>
<dbReference type="GO" id="GO:0032922">
    <property type="term" value="P:circadian regulation of gene expression"/>
    <property type="evidence" value="ECO:0000250"/>
    <property type="project" value="UniProtKB"/>
</dbReference>
<dbReference type="GO" id="GO:0045475">
    <property type="term" value="P:locomotor rhythm"/>
    <property type="evidence" value="ECO:0000250"/>
    <property type="project" value="UniProtKB"/>
</dbReference>
<dbReference type="GO" id="GO:0045892">
    <property type="term" value="P:negative regulation of DNA-templated transcription"/>
    <property type="evidence" value="ECO:0000250"/>
    <property type="project" value="UniProtKB"/>
</dbReference>
<dbReference type="InterPro" id="IPR031373">
    <property type="entry name" value="Ciart"/>
</dbReference>
<dbReference type="PANTHER" id="PTHR35441">
    <property type="entry name" value="CIRCADIAN-ASSOCIATED TRANSCRIPTIONAL REPRESSOR"/>
    <property type="match status" value="1"/>
</dbReference>
<dbReference type="PANTHER" id="PTHR35441:SF1">
    <property type="entry name" value="CIRCADIAN-ASSOCIATED TRANSCRIPTIONAL REPRESSOR"/>
    <property type="match status" value="1"/>
</dbReference>
<dbReference type="Pfam" id="PF15673">
    <property type="entry name" value="Ciart"/>
    <property type="match status" value="1"/>
</dbReference>
<sequence>MDSPSSVSSYSSYSLSSSFPTSPVNSDFGFPSDSEREDKGAHGPRPDTVGQRGGSRPSPGPIRCRHRSKVSGNQHTPSHPKQRGSASPMAGSGAKRSRDGELETSLNTQGCTTEGDLLFAQKCKELQGFIPPLTDLLNGLKMGRFERGLSSFQQSVAMDRIQRIVGVLQKPQMGERYLGTLLQVEGMLKTWFPQIAAQKSSLGGGKHQLTKHFPSHHSDSAASSPASPMEKMDQTQLGHLALKPKQPWHLTQWPAMNLTWIHTTPICNPPLSSPGTISFSHGPLGTGTGIGVILFLQHGVQPFTHSAPTTPVPPTTASPVIPGEPMKLSGEGPRCYSLPVTLPSDWSYTLSPPSLPTLARKMTIGHREQQRSHPPVAADAHLLNL</sequence>
<feature type="chain" id="PRO_0000251193" description="Circadian-associated transcriptional repressor">
    <location>
        <begin position="1"/>
        <end position="385"/>
    </location>
</feature>
<feature type="region of interest" description="Disordered" evidence="2">
    <location>
        <begin position="1"/>
        <end position="108"/>
    </location>
</feature>
<feature type="region of interest" description="Disordered" evidence="2">
    <location>
        <begin position="203"/>
        <end position="233"/>
    </location>
</feature>
<feature type="region of interest" description="Disordered" evidence="2">
    <location>
        <begin position="365"/>
        <end position="385"/>
    </location>
</feature>
<feature type="compositionally biased region" description="Low complexity" evidence="2">
    <location>
        <begin position="1"/>
        <end position="26"/>
    </location>
</feature>
<feature type="compositionally biased region" description="Basic and acidic residues" evidence="2">
    <location>
        <begin position="33"/>
        <end position="45"/>
    </location>
</feature>
<feature type="compositionally biased region" description="Polar residues" evidence="2">
    <location>
        <begin position="70"/>
        <end position="79"/>
    </location>
</feature>
<feature type="splice variant" id="VSP_020743" description="In isoform 2." evidence="4">
    <original>C</original>
    <variation>D</variation>
    <location>
        <position position="123"/>
    </location>
</feature>
<feature type="splice variant" id="VSP_020744" description="In isoform 2." evidence="4">
    <location>
        <begin position="124"/>
        <end position="385"/>
    </location>
</feature>
<feature type="sequence conflict" description="In Ref. 1; BAB71326." evidence="5" ref="1">
    <original>M</original>
    <variation>L</variation>
    <location>
        <position position="187"/>
    </location>
</feature>
<comment type="function">
    <text evidence="1">Transcriptional repressor which forms a negative regulatory component of the circadian clock and acts independently of the circadian transcriptional repressors: CRY1, CRY2 and BHLHE41. In a histone deacetylase-dependent manner represses the transcriptional activator activity of the CLOCK-BMAL1 heterodimer. Abrogates the interaction of BMAL1 with the transcriptional coactivator CREBBP and can repress the histone acetyl-transferase activity of the CLOCK-BMAL1 heterodimer, reducing histone acetylation of its target genes. Rhythmically binds the E-box elements (5'-CACGTG-3') on circadian gene promoters and its occupancy shows circadian oscillation antiphasic to BMAL1. Interacts with the glucocorticoid receptor (NR3C1) and contributes to the repressive function in the glucocorticoid response (By similarity).</text>
</comment>
<comment type="subunit">
    <text evidence="1 3">Interacts with PER2, CRY2, BHLHE41, HDAC1 and NR3C1 (By similarity). Interacts with BMAL1.</text>
</comment>
<comment type="interaction">
    <interactant intactId="EBI-10265133">
        <id>Q8N365</id>
    </interactant>
    <interactant intactId="EBI-718729">
        <id>P55212</id>
        <label>CASP6</label>
    </interactant>
    <organismsDiffer>false</organismsDiffer>
    <experiments>3</experiments>
</comment>
<comment type="interaction">
    <interactant intactId="EBI-10265133">
        <id>Q8N365</id>
    </interactant>
    <interactant intactId="EBI-7875264">
        <id>O75553</id>
        <label>DAB1</label>
    </interactant>
    <organismsDiffer>false</organismsDiffer>
    <experiments>3</experiments>
</comment>
<comment type="interaction">
    <interactant intactId="EBI-10265133">
        <id>Q8N365</id>
    </interactant>
    <interactant intactId="EBI-21591415">
        <id>P13473-2</id>
        <label>LAMP2</label>
    </interactant>
    <organismsDiffer>false</organismsDiffer>
    <experiments>3</experiments>
</comment>
<comment type="interaction">
    <interactant intactId="EBI-10265133">
        <id>Q8N365</id>
    </interactant>
    <interactant intactId="EBI-11956831">
        <id>Q13952-2</id>
        <label>NFYC</label>
    </interactant>
    <organismsDiffer>false</organismsDiffer>
    <experiments>3</experiments>
</comment>
<comment type="interaction">
    <interactant intactId="EBI-10265133">
        <id>Q8N365</id>
    </interactant>
    <interactant intactId="EBI-644534">
        <id>Q9WTL8</id>
        <label>Bmal1</label>
    </interactant>
    <organismsDiffer>true</organismsDiffer>
    <experiments>6</experiments>
</comment>
<comment type="interaction">
    <interactant intactId="EBI-10265133">
        <id>Q8N365</id>
    </interactant>
    <interactant intactId="EBI-1266779">
        <id>O54943</id>
        <label>Per2</label>
    </interactant>
    <organismsDiffer>true</organismsDiffer>
    <experiments>4</experiments>
</comment>
<comment type="subcellular location">
    <subcellularLocation>
        <location evidence="1">Nucleus</location>
    </subcellularLocation>
    <subcellularLocation>
        <location evidence="1">Nucleus</location>
        <location evidence="1">PML body</location>
    </subcellularLocation>
    <text evidence="1">Co-localizes with the CLOCK-BMAL1 heterodimer in the PML body.</text>
</comment>
<comment type="alternative products">
    <event type="alternative splicing"/>
    <isoform>
        <id>Q8N365-1</id>
        <name>1</name>
        <sequence type="displayed"/>
    </isoform>
    <isoform>
        <id>Q8N365-2</id>
        <name>2</name>
        <sequence type="described" ref="VSP_020743 VSP_020744"/>
    </isoform>
</comment>
<keyword id="KW-0025">Alternative splicing</keyword>
<keyword id="KW-0090">Biological rhythms</keyword>
<keyword id="KW-0539">Nucleus</keyword>
<keyword id="KW-1267">Proteomics identification</keyword>
<keyword id="KW-1185">Reference proteome</keyword>
<keyword id="KW-0678">Repressor</keyword>
<keyword id="KW-0804">Transcription</keyword>
<keyword id="KW-0805">Transcription regulation</keyword>
<accession>Q8N365</accession>
<accession>B2RD43</accession>
<accession>D3DV01</accession>
<accession>Q8N795</accession>
<accession>Q96MG6</accession>
<name>CIART_HUMAN</name>
<organism>
    <name type="scientific">Homo sapiens</name>
    <name type="common">Human</name>
    <dbReference type="NCBI Taxonomy" id="9606"/>
    <lineage>
        <taxon>Eukaryota</taxon>
        <taxon>Metazoa</taxon>
        <taxon>Chordata</taxon>
        <taxon>Craniata</taxon>
        <taxon>Vertebrata</taxon>
        <taxon>Euteleostomi</taxon>
        <taxon>Mammalia</taxon>
        <taxon>Eutheria</taxon>
        <taxon>Euarchontoglires</taxon>
        <taxon>Primates</taxon>
        <taxon>Haplorrhini</taxon>
        <taxon>Catarrhini</taxon>
        <taxon>Hominidae</taxon>
        <taxon>Homo</taxon>
    </lineage>
</organism>
<reference key="1">
    <citation type="journal article" date="2004" name="Nat. Genet.">
        <title>Complete sequencing and characterization of 21,243 full-length human cDNAs.</title>
        <authorList>
            <person name="Ota T."/>
            <person name="Suzuki Y."/>
            <person name="Nishikawa T."/>
            <person name="Otsuki T."/>
            <person name="Sugiyama T."/>
            <person name="Irie R."/>
            <person name="Wakamatsu A."/>
            <person name="Hayashi K."/>
            <person name="Sato H."/>
            <person name="Nagai K."/>
            <person name="Kimura K."/>
            <person name="Makita H."/>
            <person name="Sekine M."/>
            <person name="Obayashi M."/>
            <person name="Nishi T."/>
            <person name="Shibahara T."/>
            <person name="Tanaka T."/>
            <person name="Ishii S."/>
            <person name="Yamamoto J."/>
            <person name="Saito K."/>
            <person name="Kawai Y."/>
            <person name="Isono Y."/>
            <person name="Nakamura Y."/>
            <person name="Nagahari K."/>
            <person name="Murakami K."/>
            <person name="Yasuda T."/>
            <person name="Iwayanagi T."/>
            <person name="Wagatsuma M."/>
            <person name="Shiratori A."/>
            <person name="Sudo H."/>
            <person name="Hosoiri T."/>
            <person name="Kaku Y."/>
            <person name="Kodaira H."/>
            <person name="Kondo H."/>
            <person name="Sugawara M."/>
            <person name="Takahashi M."/>
            <person name="Kanda K."/>
            <person name="Yokoi T."/>
            <person name="Furuya T."/>
            <person name="Kikkawa E."/>
            <person name="Omura Y."/>
            <person name="Abe K."/>
            <person name="Kamihara K."/>
            <person name="Katsuta N."/>
            <person name="Sato K."/>
            <person name="Tanikawa M."/>
            <person name="Yamazaki M."/>
            <person name="Ninomiya K."/>
            <person name="Ishibashi T."/>
            <person name="Yamashita H."/>
            <person name="Murakawa K."/>
            <person name="Fujimori K."/>
            <person name="Tanai H."/>
            <person name="Kimata M."/>
            <person name="Watanabe M."/>
            <person name="Hiraoka S."/>
            <person name="Chiba Y."/>
            <person name="Ishida S."/>
            <person name="Ono Y."/>
            <person name="Takiguchi S."/>
            <person name="Watanabe S."/>
            <person name="Yosida M."/>
            <person name="Hotuta T."/>
            <person name="Kusano J."/>
            <person name="Kanehori K."/>
            <person name="Takahashi-Fujii A."/>
            <person name="Hara H."/>
            <person name="Tanase T.-O."/>
            <person name="Nomura Y."/>
            <person name="Togiya S."/>
            <person name="Komai F."/>
            <person name="Hara R."/>
            <person name="Takeuchi K."/>
            <person name="Arita M."/>
            <person name="Imose N."/>
            <person name="Musashino K."/>
            <person name="Yuuki H."/>
            <person name="Oshima A."/>
            <person name="Sasaki N."/>
            <person name="Aotsuka S."/>
            <person name="Yoshikawa Y."/>
            <person name="Matsunawa H."/>
            <person name="Ichihara T."/>
            <person name="Shiohata N."/>
            <person name="Sano S."/>
            <person name="Moriya S."/>
            <person name="Momiyama H."/>
            <person name="Satoh N."/>
            <person name="Takami S."/>
            <person name="Terashima Y."/>
            <person name="Suzuki O."/>
            <person name="Nakagawa S."/>
            <person name="Senoh A."/>
            <person name="Mizoguchi H."/>
            <person name="Goto Y."/>
            <person name="Shimizu F."/>
            <person name="Wakebe H."/>
            <person name="Hishigaki H."/>
            <person name="Watanabe T."/>
            <person name="Sugiyama A."/>
            <person name="Takemoto M."/>
            <person name="Kawakami B."/>
            <person name="Yamazaki M."/>
            <person name="Watanabe K."/>
            <person name="Kumagai A."/>
            <person name="Itakura S."/>
            <person name="Fukuzumi Y."/>
            <person name="Fujimori Y."/>
            <person name="Komiyama M."/>
            <person name="Tashiro H."/>
            <person name="Tanigami A."/>
            <person name="Fujiwara T."/>
            <person name="Ono T."/>
            <person name="Yamada K."/>
            <person name="Fujii Y."/>
            <person name="Ozaki K."/>
            <person name="Hirao M."/>
            <person name="Ohmori Y."/>
            <person name="Kawabata A."/>
            <person name="Hikiji T."/>
            <person name="Kobatake N."/>
            <person name="Inagaki H."/>
            <person name="Ikema Y."/>
            <person name="Okamoto S."/>
            <person name="Okitani R."/>
            <person name="Kawakami T."/>
            <person name="Noguchi S."/>
            <person name="Itoh T."/>
            <person name="Shigeta K."/>
            <person name="Senba T."/>
            <person name="Matsumura K."/>
            <person name="Nakajima Y."/>
            <person name="Mizuno T."/>
            <person name="Morinaga M."/>
            <person name="Sasaki M."/>
            <person name="Togashi T."/>
            <person name="Oyama M."/>
            <person name="Hata H."/>
            <person name="Watanabe M."/>
            <person name="Komatsu T."/>
            <person name="Mizushima-Sugano J."/>
            <person name="Satoh T."/>
            <person name="Shirai Y."/>
            <person name="Takahashi Y."/>
            <person name="Nakagawa K."/>
            <person name="Okumura K."/>
            <person name="Nagase T."/>
            <person name="Nomura N."/>
            <person name="Kikuchi H."/>
            <person name="Masuho Y."/>
            <person name="Yamashita R."/>
            <person name="Nakai K."/>
            <person name="Yada T."/>
            <person name="Nakamura Y."/>
            <person name="Ohara O."/>
            <person name="Isogai T."/>
            <person name="Sugano S."/>
        </authorList>
    </citation>
    <scope>NUCLEOTIDE SEQUENCE [LARGE SCALE MRNA] (ISOFORMS 1 AND 2)</scope>
    <source>
        <tissue>Skeletal muscle</tissue>
        <tissue>Subthalamic nucleus</tissue>
    </source>
</reference>
<reference key="2">
    <citation type="journal article" date="2006" name="Nature">
        <title>The DNA sequence and biological annotation of human chromosome 1.</title>
        <authorList>
            <person name="Gregory S.G."/>
            <person name="Barlow K.F."/>
            <person name="McLay K.E."/>
            <person name="Kaul R."/>
            <person name="Swarbreck D."/>
            <person name="Dunham A."/>
            <person name="Scott C.E."/>
            <person name="Howe K.L."/>
            <person name="Woodfine K."/>
            <person name="Spencer C.C.A."/>
            <person name="Jones M.C."/>
            <person name="Gillson C."/>
            <person name="Searle S."/>
            <person name="Zhou Y."/>
            <person name="Kokocinski F."/>
            <person name="McDonald L."/>
            <person name="Evans R."/>
            <person name="Phillips K."/>
            <person name="Atkinson A."/>
            <person name="Cooper R."/>
            <person name="Jones C."/>
            <person name="Hall R.E."/>
            <person name="Andrews T.D."/>
            <person name="Lloyd C."/>
            <person name="Ainscough R."/>
            <person name="Almeida J.P."/>
            <person name="Ambrose K.D."/>
            <person name="Anderson F."/>
            <person name="Andrew R.W."/>
            <person name="Ashwell R.I.S."/>
            <person name="Aubin K."/>
            <person name="Babbage A.K."/>
            <person name="Bagguley C.L."/>
            <person name="Bailey J."/>
            <person name="Beasley H."/>
            <person name="Bethel G."/>
            <person name="Bird C.P."/>
            <person name="Bray-Allen S."/>
            <person name="Brown J.Y."/>
            <person name="Brown A.J."/>
            <person name="Buckley D."/>
            <person name="Burton J."/>
            <person name="Bye J."/>
            <person name="Carder C."/>
            <person name="Chapman J.C."/>
            <person name="Clark S.Y."/>
            <person name="Clarke G."/>
            <person name="Clee C."/>
            <person name="Cobley V."/>
            <person name="Collier R.E."/>
            <person name="Corby N."/>
            <person name="Coville G.J."/>
            <person name="Davies J."/>
            <person name="Deadman R."/>
            <person name="Dunn M."/>
            <person name="Earthrowl M."/>
            <person name="Ellington A.G."/>
            <person name="Errington H."/>
            <person name="Frankish A."/>
            <person name="Frankland J."/>
            <person name="French L."/>
            <person name="Garner P."/>
            <person name="Garnett J."/>
            <person name="Gay L."/>
            <person name="Ghori M.R.J."/>
            <person name="Gibson R."/>
            <person name="Gilby L.M."/>
            <person name="Gillett W."/>
            <person name="Glithero R.J."/>
            <person name="Grafham D.V."/>
            <person name="Griffiths C."/>
            <person name="Griffiths-Jones S."/>
            <person name="Grocock R."/>
            <person name="Hammond S."/>
            <person name="Harrison E.S.I."/>
            <person name="Hart E."/>
            <person name="Haugen E."/>
            <person name="Heath P.D."/>
            <person name="Holmes S."/>
            <person name="Holt K."/>
            <person name="Howden P.J."/>
            <person name="Hunt A.R."/>
            <person name="Hunt S.E."/>
            <person name="Hunter G."/>
            <person name="Isherwood J."/>
            <person name="James R."/>
            <person name="Johnson C."/>
            <person name="Johnson D."/>
            <person name="Joy A."/>
            <person name="Kay M."/>
            <person name="Kershaw J.K."/>
            <person name="Kibukawa M."/>
            <person name="Kimberley A.M."/>
            <person name="King A."/>
            <person name="Knights A.J."/>
            <person name="Lad H."/>
            <person name="Laird G."/>
            <person name="Lawlor S."/>
            <person name="Leongamornlert D.A."/>
            <person name="Lloyd D.M."/>
            <person name="Loveland J."/>
            <person name="Lovell J."/>
            <person name="Lush M.J."/>
            <person name="Lyne R."/>
            <person name="Martin S."/>
            <person name="Mashreghi-Mohammadi M."/>
            <person name="Matthews L."/>
            <person name="Matthews N.S.W."/>
            <person name="McLaren S."/>
            <person name="Milne S."/>
            <person name="Mistry S."/>
            <person name="Moore M.J.F."/>
            <person name="Nickerson T."/>
            <person name="O'Dell C.N."/>
            <person name="Oliver K."/>
            <person name="Palmeiri A."/>
            <person name="Palmer S.A."/>
            <person name="Parker A."/>
            <person name="Patel D."/>
            <person name="Pearce A.V."/>
            <person name="Peck A.I."/>
            <person name="Pelan S."/>
            <person name="Phelps K."/>
            <person name="Phillimore B.J."/>
            <person name="Plumb R."/>
            <person name="Rajan J."/>
            <person name="Raymond C."/>
            <person name="Rouse G."/>
            <person name="Saenphimmachak C."/>
            <person name="Sehra H.K."/>
            <person name="Sheridan E."/>
            <person name="Shownkeen R."/>
            <person name="Sims S."/>
            <person name="Skuce C.D."/>
            <person name="Smith M."/>
            <person name="Steward C."/>
            <person name="Subramanian S."/>
            <person name="Sycamore N."/>
            <person name="Tracey A."/>
            <person name="Tromans A."/>
            <person name="Van Helmond Z."/>
            <person name="Wall M."/>
            <person name="Wallis J.M."/>
            <person name="White S."/>
            <person name="Whitehead S.L."/>
            <person name="Wilkinson J.E."/>
            <person name="Willey D.L."/>
            <person name="Williams H."/>
            <person name="Wilming L."/>
            <person name="Wray P.W."/>
            <person name="Wu Z."/>
            <person name="Coulson A."/>
            <person name="Vaudin M."/>
            <person name="Sulston J.E."/>
            <person name="Durbin R.M."/>
            <person name="Hubbard T."/>
            <person name="Wooster R."/>
            <person name="Dunham I."/>
            <person name="Carter N.P."/>
            <person name="McVean G."/>
            <person name="Ross M.T."/>
            <person name="Harrow J."/>
            <person name="Olson M.V."/>
            <person name="Beck S."/>
            <person name="Rogers J."/>
            <person name="Bentley D.R."/>
        </authorList>
    </citation>
    <scope>NUCLEOTIDE SEQUENCE [LARGE SCALE GENOMIC DNA]</scope>
    <source>
        <tissue>Brain</tissue>
    </source>
</reference>
<reference key="3">
    <citation type="submission" date="2005-09" db="EMBL/GenBank/DDBJ databases">
        <authorList>
            <person name="Mural R.J."/>
            <person name="Istrail S."/>
            <person name="Sutton G.G."/>
            <person name="Florea L."/>
            <person name="Halpern A.L."/>
            <person name="Mobarry C.M."/>
            <person name="Lippert R."/>
            <person name="Walenz B."/>
            <person name="Shatkay H."/>
            <person name="Dew I."/>
            <person name="Miller J.R."/>
            <person name="Flanigan M.J."/>
            <person name="Edwards N.J."/>
            <person name="Bolanos R."/>
            <person name="Fasulo D."/>
            <person name="Halldorsson B.V."/>
            <person name="Hannenhalli S."/>
            <person name="Turner R."/>
            <person name="Yooseph S."/>
            <person name="Lu F."/>
            <person name="Nusskern D.R."/>
            <person name="Shue B.C."/>
            <person name="Zheng X.H."/>
            <person name="Zhong F."/>
            <person name="Delcher A.L."/>
            <person name="Huson D.H."/>
            <person name="Kravitz S.A."/>
            <person name="Mouchard L."/>
            <person name="Reinert K."/>
            <person name="Remington K.A."/>
            <person name="Clark A.G."/>
            <person name="Waterman M.S."/>
            <person name="Eichler E.E."/>
            <person name="Adams M.D."/>
            <person name="Hunkapiller M.W."/>
            <person name="Myers E.W."/>
            <person name="Venter J.C."/>
        </authorList>
    </citation>
    <scope>NUCLEOTIDE SEQUENCE [LARGE SCALE GENOMIC DNA]</scope>
</reference>
<reference key="4">
    <citation type="journal article" date="2004" name="Genome Res.">
        <title>The status, quality, and expansion of the NIH full-length cDNA project: the Mammalian Gene Collection (MGC).</title>
        <authorList>
            <consortium name="The MGC Project Team"/>
        </authorList>
    </citation>
    <scope>NUCLEOTIDE SEQUENCE [LARGE SCALE MRNA] (ISOFORM 1)</scope>
    <source>
        <tissue>Brain</tissue>
        <tissue>Testis</tissue>
    </source>
</reference>
<reference key="5">
    <citation type="journal article" date="2014" name="J. Biol. Chem.">
        <title>Gene model 129 (Gm129) encodes a novel transcriptional repressor that modulates circadian gene expression.</title>
        <authorList>
            <person name="Annayev Y."/>
            <person name="Adar S."/>
            <person name="Chiou Y.Y."/>
            <person name="Lieb J."/>
            <person name="Sancar A."/>
            <person name="Ye R."/>
        </authorList>
    </citation>
    <scope>INTERACTION WITH BMAL1</scope>
</reference>
<protein>
    <recommendedName>
        <fullName>Circadian-associated transcriptional repressor</fullName>
    </recommendedName>
    <alternativeName>
        <fullName>ChIP-derived repressor of network oscillator</fullName>
        <shortName>Chrono</shortName>
    </alternativeName>
    <alternativeName>
        <fullName>Computationally highlighted repressor of the network oscillator</fullName>
    </alternativeName>
</protein>